<comment type="function">
    <text evidence="1">Catalyzes the conversion of 4-hydroxy-tetrahydrodipicolinate (HTPA) to tetrahydrodipicolinate.</text>
</comment>
<comment type="catalytic activity">
    <reaction evidence="1">
        <text>(S)-2,3,4,5-tetrahydrodipicolinate + NAD(+) + H2O = (2S,4S)-4-hydroxy-2,3,4,5-tetrahydrodipicolinate + NADH + H(+)</text>
        <dbReference type="Rhea" id="RHEA:35323"/>
        <dbReference type="ChEBI" id="CHEBI:15377"/>
        <dbReference type="ChEBI" id="CHEBI:15378"/>
        <dbReference type="ChEBI" id="CHEBI:16845"/>
        <dbReference type="ChEBI" id="CHEBI:57540"/>
        <dbReference type="ChEBI" id="CHEBI:57945"/>
        <dbReference type="ChEBI" id="CHEBI:67139"/>
        <dbReference type="EC" id="1.17.1.8"/>
    </reaction>
</comment>
<comment type="catalytic activity">
    <reaction evidence="1">
        <text>(S)-2,3,4,5-tetrahydrodipicolinate + NADP(+) + H2O = (2S,4S)-4-hydroxy-2,3,4,5-tetrahydrodipicolinate + NADPH + H(+)</text>
        <dbReference type="Rhea" id="RHEA:35331"/>
        <dbReference type="ChEBI" id="CHEBI:15377"/>
        <dbReference type="ChEBI" id="CHEBI:15378"/>
        <dbReference type="ChEBI" id="CHEBI:16845"/>
        <dbReference type="ChEBI" id="CHEBI:57783"/>
        <dbReference type="ChEBI" id="CHEBI:58349"/>
        <dbReference type="ChEBI" id="CHEBI:67139"/>
        <dbReference type="EC" id="1.17.1.8"/>
    </reaction>
</comment>
<comment type="pathway">
    <text evidence="1">Amino-acid biosynthesis; L-lysine biosynthesis via DAP pathway; (S)-tetrahydrodipicolinate from L-aspartate: step 4/4.</text>
</comment>
<comment type="subunit">
    <text evidence="1">Homotetramer.</text>
</comment>
<comment type="subcellular location">
    <subcellularLocation>
        <location evidence="1">Cytoplasm</location>
    </subcellularLocation>
</comment>
<comment type="similarity">
    <text evidence="1">Belongs to the DapB family.</text>
</comment>
<comment type="caution">
    <text evidence="2">Was originally thought to be a dihydrodipicolinate reductase (DHDPR), catalyzing the conversion of dihydrodipicolinate to tetrahydrodipicolinate. However, it was shown in E.coli that the substrate of the enzymatic reaction is not dihydrodipicolinate (DHDP) but in fact (2S,4S)-4-hydroxy-2,3,4,5-tetrahydrodipicolinic acid (HTPA), the product released by the DapA-catalyzed reaction.</text>
</comment>
<dbReference type="EC" id="1.17.1.8" evidence="1"/>
<dbReference type="EMBL" id="AP009240">
    <property type="protein sequence ID" value="BAG75553.1"/>
    <property type="molecule type" value="Genomic_DNA"/>
</dbReference>
<dbReference type="RefSeq" id="WP_000543605.1">
    <property type="nucleotide sequence ID" value="NC_011415.1"/>
</dbReference>
<dbReference type="SMR" id="B6HYX9"/>
<dbReference type="KEGG" id="ecy:ECSE_0029"/>
<dbReference type="HOGENOM" id="CLU_047479_2_1_6"/>
<dbReference type="UniPathway" id="UPA00034">
    <property type="reaction ID" value="UER00018"/>
</dbReference>
<dbReference type="Proteomes" id="UP000008199">
    <property type="component" value="Chromosome"/>
</dbReference>
<dbReference type="GO" id="GO:0005829">
    <property type="term" value="C:cytosol"/>
    <property type="evidence" value="ECO:0007669"/>
    <property type="project" value="TreeGrafter"/>
</dbReference>
<dbReference type="GO" id="GO:0008839">
    <property type="term" value="F:4-hydroxy-tetrahydrodipicolinate reductase"/>
    <property type="evidence" value="ECO:0007669"/>
    <property type="project" value="UniProtKB-EC"/>
</dbReference>
<dbReference type="GO" id="GO:0051287">
    <property type="term" value="F:NAD binding"/>
    <property type="evidence" value="ECO:0007669"/>
    <property type="project" value="UniProtKB-UniRule"/>
</dbReference>
<dbReference type="GO" id="GO:0050661">
    <property type="term" value="F:NADP binding"/>
    <property type="evidence" value="ECO:0007669"/>
    <property type="project" value="UniProtKB-UniRule"/>
</dbReference>
<dbReference type="GO" id="GO:0016726">
    <property type="term" value="F:oxidoreductase activity, acting on CH or CH2 groups, NAD or NADP as acceptor"/>
    <property type="evidence" value="ECO:0007669"/>
    <property type="project" value="UniProtKB-UniRule"/>
</dbReference>
<dbReference type="GO" id="GO:0019877">
    <property type="term" value="P:diaminopimelate biosynthetic process"/>
    <property type="evidence" value="ECO:0007669"/>
    <property type="project" value="UniProtKB-UniRule"/>
</dbReference>
<dbReference type="GO" id="GO:0009089">
    <property type="term" value="P:lysine biosynthetic process via diaminopimelate"/>
    <property type="evidence" value="ECO:0007669"/>
    <property type="project" value="UniProtKB-UniRule"/>
</dbReference>
<dbReference type="CDD" id="cd02274">
    <property type="entry name" value="DHDPR_N"/>
    <property type="match status" value="1"/>
</dbReference>
<dbReference type="FunFam" id="3.30.360.10:FF:000004">
    <property type="entry name" value="4-hydroxy-tetrahydrodipicolinate reductase"/>
    <property type="match status" value="1"/>
</dbReference>
<dbReference type="FunFam" id="3.40.50.720:FF:000048">
    <property type="entry name" value="4-hydroxy-tetrahydrodipicolinate reductase"/>
    <property type="match status" value="1"/>
</dbReference>
<dbReference type="Gene3D" id="3.30.360.10">
    <property type="entry name" value="Dihydrodipicolinate Reductase, domain 2"/>
    <property type="match status" value="1"/>
</dbReference>
<dbReference type="Gene3D" id="3.40.50.720">
    <property type="entry name" value="NAD(P)-binding Rossmann-like Domain"/>
    <property type="match status" value="1"/>
</dbReference>
<dbReference type="HAMAP" id="MF_00102">
    <property type="entry name" value="DapB"/>
    <property type="match status" value="1"/>
</dbReference>
<dbReference type="InterPro" id="IPR022663">
    <property type="entry name" value="DapB_C"/>
</dbReference>
<dbReference type="InterPro" id="IPR000846">
    <property type="entry name" value="DapB_N"/>
</dbReference>
<dbReference type="InterPro" id="IPR022664">
    <property type="entry name" value="DapB_N_CS"/>
</dbReference>
<dbReference type="InterPro" id="IPR023940">
    <property type="entry name" value="DHDPR_bac"/>
</dbReference>
<dbReference type="InterPro" id="IPR036291">
    <property type="entry name" value="NAD(P)-bd_dom_sf"/>
</dbReference>
<dbReference type="NCBIfam" id="TIGR00036">
    <property type="entry name" value="dapB"/>
    <property type="match status" value="1"/>
</dbReference>
<dbReference type="PANTHER" id="PTHR20836:SF0">
    <property type="entry name" value="4-HYDROXY-TETRAHYDRODIPICOLINATE REDUCTASE 1, CHLOROPLASTIC-RELATED"/>
    <property type="match status" value="1"/>
</dbReference>
<dbReference type="PANTHER" id="PTHR20836">
    <property type="entry name" value="DIHYDRODIPICOLINATE REDUCTASE"/>
    <property type="match status" value="1"/>
</dbReference>
<dbReference type="Pfam" id="PF05173">
    <property type="entry name" value="DapB_C"/>
    <property type="match status" value="1"/>
</dbReference>
<dbReference type="Pfam" id="PF01113">
    <property type="entry name" value="DapB_N"/>
    <property type="match status" value="1"/>
</dbReference>
<dbReference type="PIRSF" id="PIRSF000161">
    <property type="entry name" value="DHPR"/>
    <property type="match status" value="1"/>
</dbReference>
<dbReference type="SUPFAM" id="SSF55347">
    <property type="entry name" value="Glyceraldehyde-3-phosphate dehydrogenase-like, C-terminal domain"/>
    <property type="match status" value="1"/>
</dbReference>
<dbReference type="SUPFAM" id="SSF51735">
    <property type="entry name" value="NAD(P)-binding Rossmann-fold domains"/>
    <property type="match status" value="1"/>
</dbReference>
<dbReference type="PROSITE" id="PS01298">
    <property type="entry name" value="DAPB"/>
    <property type="match status" value="1"/>
</dbReference>
<gene>
    <name evidence="1" type="primary">dapB</name>
    <name type="ordered locus">ECSE_0029</name>
</gene>
<accession>B6HYX9</accession>
<sequence>MHDANIRVAIAGAGGRMGRQLIQAALALEGVQLGAALEREGSSLLGSDAGELAGAGKTGVTVQSSLDAVKDDFDVFIDFTRPEGTLNHLAFCRQHGKGMVIGTTGFDEAGKQAIRDAAADIAIVFAANFSVGVNVMLKLLEKAAKVMGDYTDIEIIEAHHRHKVDAPSGTALAMGEAIAHALDKDLKDCAVYSREGHTGERVPGTIGFATVRAGDIVGEHTAMFADIGERLEITHKASSRMTFANGAVRSALWLSGKESGLFDMRDVLDLNSL</sequence>
<proteinExistence type="inferred from homology"/>
<evidence type="ECO:0000255" key="1">
    <source>
        <dbReference type="HAMAP-Rule" id="MF_00102"/>
    </source>
</evidence>
<evidence type="ECO:0000305" key="2"/>
<name>DAPB_ECOSE</name>
<organism>
    <name type="scientific">Escherichia coli (strain SE11)</name>
    <dbReference type="NCBI Taxonomy" id="409438"/>
    <lineage>
        <taxon>Bacteria</taxon>
        <taxon>Pseudomonadati</taxon>
        <taxon>Pseudomonadota</taxon>
        <taxon>Gammaproteobacteria</taxon>
        <taxon>Enterobacterales</taxon>
        <taxon>Enterobacteriaceae</taxon>
        <taxon>Escherichia</taxon>
    </lineage>
</organism>
<protein>
    <recommendedName>
        <fullName evidence="1">4-hydroxy-tetrahydrodipicolinate reductase</fullName>
        <shortName evidence="1">HTPA reductase</shortName>
        <ecNumber evidence="1">1.17.1.8</ecNumber>
    </recommendedName>
</protein>
<feature type="chain" id="PRO_1000093966" description="4-hydroxy-tetrahydrodipicolinate reductase">
    <location>
        <begin position="1"/>
        <end position="273"/>
    </location>
</feature>
<feature type="active site" description="Proton donor/acceptor" evidence="1">
    <location>
        <position position="159"/>
    </location>
</feature>
<feature type="active site" description="Proton donor" evidence="1">
    <location>
        <position position="163"/>
    </location>
</feature>
<feature type="binding site" evidence="1">
    <location>
        <begin position="12"/>
        <end position="17"/>
    </location>
    <ligand>
        <name>NAD(+)</name>
        <dbReference type="ChEBI" id="CHEBI:57540"/>
    </ligand>
</feature>
<feature type="binding site" evidence="1">
    <location>
        <position position="38"/>
    </location>
    <ligand>
        <name>NAD(+)</name>
        <dbReference type="ChEBI" id="CHEBI:57540"/>
    </ligand>
</feature>
<feature type="binding site" evidence="1">
    <location>
        <position position="39"/>
    </location>
    <ligand>
        <name>NADP(+)</name>
        <dbReference type="ChEBI" id="CHEBI:58349"/>
    </ligand>
</feature>
<feature type="binding site" evidence="1">
    <location>
        <begin position="102"/>
        <end position="104"/>
    </location>
    <ligand>
        <name>NAD(+)</name>
        <dbReference type="ChEBI" id="CHEBI:57540"/>
    </ligand>
</feature>
<feature type="binding site" evidence="1">
    <location>
        <begin position="126"/>
        <end position="129"/>
    </location>
    <ligand>
        <name>NAD(+)</name>
        <dbReference type="ChEBI" id="CHEBI:57540"/>
    </ligand>
</feature>
<feature type="binding site" evidence="1">
    <location>
        <position position="160"/>
    </location>
    <ligand>
        <name>(S)-2,3,4,5-tetrahydrodipicolinate</name>
        <dbReference type="ChEBI" id="CHEBI:16845"/>
    </ligand>
</feature>
<feature type="binding site" evidence="1">
    <location>
        <begin position="169"/>
        <end position="170"/>
    </location>
    <ligand>
        <name>(S)-2,3,4,5-tetrahydrodipicolinate</name>
        <dbReference type="ChEBI" id="CHEBI:16845"/>
    </ligand>
</feature>
<keyword id="KW-0028">Amino-acid biosynthesis</keyword>
<keyword id="KW-0963">Cytoplasm</keyword>
<keyword id="KW-0220">Diaminopimelate biosynthesis</keyword>
<keyword id="KW-0457">Lysine biosynthesis</keyword>
<keyword id="KW-0520">NAD</keyword>
<keyword id="KW-0521">NADP</keyword>
<keyword id="KW-0560">Oxidoreductase</keyword>
<reference key="1">
    <citation type="journal article" date="2008" name="DNA Res.">
        <title>Complete genome sequence and comparative analysis of the wild-type commensal Escherichia coli strain SE11 isolated from a healthy adult.</title>
        <authorList>
            <person name="Oshima K."/>
            <person name="Toh H."/>
            <person name="Ogura Y."/>
            <person name="Sasamoto H."/>
            <person name="Morita H."/>
            <person name="Park S.-H."/>
            <person name="Ooka T."/>
            <person name="Iyoda S."/>
            <person name="Taylor T.D."/>
            <person name="Hayashi T."/>
            <person name="Itoh K."/>
            <person name="Hattori M."/>
        </authorList>
    </citation>
    <scope>NUCLEOTIDE SEQUENCE [LARGE SCALE GENOMIC DNA]</scope>
    <source>
        <strain>SE11</strain>
    </source>
</reference>